<gene>
    <name evidence="1" type="primary">dut</name>
    <name type="ordered locus">NFA_37530</name>
</gene>
<proteinExistence type="inferred from homology"/>
<feature type="chain" id="PRO_0000182888" description="Deoxyuridine 5'-triphosphate nucleotidohydrolase">
    <location>
        <begin position="1"/>
        <end position="165"/>
    </location>
</feature>
<feature type="region of interest" description="Disordered" evidence="2">
    <location>
        <begin position="134"/>
        <end position="165"/>
    </location>
</feature>
<feature type="binding site" evidence="1">
    <location>
        <begin position="66"/>
        <end position="68"/>
    </location>
    <ligand>
        <name>substrate</name>
    </ligand>
</feature>
<feature type="binding site" evidence="1">
    <location>
        <position position="79"/>
    </location>
    <ligand>
        <name>substrate</name>
    </ligand>
</feature>
<feature type="binding site" evidence="1">
    <location>
        <begin position="83"/>
        <end position="85"/>
    </location>
    <ligand>
        <name>substrate</name>
    </ligand>
</feature>
<feature type="binding site" evidence="1">
    <location>
        <position position="93"/>
    </location>
    <ligand>
        <name>substrate</name>
    </ligand>
</feature>
<name>DUT_NOCFA</name>
<keyword id="KW-0378">Hydrolase</keyword>
<keyword id="KW-0460">Magnesium</keyword>
<keyword id="KW-0479">Metal-binding</keyword>
<keyword id="KW-0546">Nucleotide metabolism</keyword>
<keyword id="KW-1185">Reference proteome</keyword>
<accession>Q5YT90</accession>
<comment type="function">
    <text evidence="1">This enzyme is involved in nucleotide metabolism: it produces dUMP, the immediate precursor of thymidine nucleotides and it decreases the intracellular concentration of dUTP so that uracil cannot be incorporated into DNA.</text>
</comment>
<comment type="catalytic activity">
    <reaction evidence="1">
        <text>dUTP + H2O = dUMP + diphosphate + H(+)</text>
        <dbReference type="Rhea" id="RHEA:10248"/>
        <dbReference type="ChEBI" id="CHEBI:15377"/>
        <dbReference type="ChEBI" id="CHEBI:15378"/>
        <dbReference type="ChEBI" id="CHEBI:33019"/>
        <dbReference type="ChEBI" id="CHEBI:61555"/>
        <dbReference type="ChEBI" id="CHEBI:246422"/>
        <dbReference type="EC" id="3.6.1.23"/>
    </reaction>
</comment>
<comment type="cofactor">
    <cofactor evidence="1">
        <name>Mg(2+)</name>
        <dbReference type="ChEBI" id="CHEBI:18420"/>
    </cofactor>
</comment>
<comment type="pathway">
    <text evidence="1">Pyrimidine metabolism; dUMP biosynthesis; dUMP from dCTP (dUTP route): step 2/2.</text>
</comment>
<comment type="similarity">
    <text evidence="1">Belongs to the dUTPase family.</text>
</comment>
<organism>
    <name type="scientific">Nocardia farcinica (strain IFM 10152)</name>
    <dbReference type="NCBI Taxonomy" id="247156"/>
    <lineage>
        <taxon>Bacteria</taxon>
        <taxon>Bacillati</taxon>
        <taxon>Actinomycetota</taxon>
        <taxon>Actinomycetes</taxon>
        <taxon>Mycobacteriales</taxon>
        <taxon>Nocardiaceae</taxon>
        <taxon>Nocardia</taxon>
    </lineage>
</organism>
<dbReference type="EC" id="3.6.1.23" evidence="1"/>
<dbReference type="EMBL" id="AP006618">
    <property type="protein sequence ID" value="BAD58601.1"/>
    <property type="molecule type" value="Genomic_DNA"/>
</dbReference>
<dbReference type="RefSeq" id="WP_011210286.1">
    <property type="nucleotide sequence ID" value="NC_006361.1"/>
</dbReference>
<dbReference type="SMR" id="Q5YT90"/>
<dbReference type="STRING" id="247156.NFA_37530"/>
<dbReference type="GeneID" id="61134446"/>
<dbReference type="KEGG" id="nfa:NFA_37530"/>
<dbReference type="eggNOG" id="COG0756">
    <property type="taxonomic scope" value="Bacteria"/>
</dbReference>
<dbReference type="HOGENOM" id="CLU_068508_1_3_11"/>
<dbReference type="OrthoDB" id="9809956at2"/>
<dbReference type="UniPathway" id="UPA00610">
    <property type="reaction ID" value="UER00666"/>
</dbReference>
<dbReference type="Proteomes" id="UP000006820">
    <property type="component" value="Chromosome"/>
</dbReference>
<dbReference type="GO" id="GO:0004170">
    <property type="term" value="F:dUTP diphosphatase activity"/>
    <property type="evidence" value="ECO:0007669"/>
    <property type="project" value="UniProtKB-UniRule"/>
</dbReference>
<dbReference type="GO" id="GO:0000287">
    <property type="term" value="F:magnesium ion binding"/>
    <property type="evidence" value="ECO:0007669"/>
    <property type="project" value="UniProtKB-UniRule"/>
</dbReference>
<dbReference type="GO" id="GO:0006226">
    <property type="term" value="P:dUMP biosynthetic process"/>
    <property type="evidence" value="ECO:0007669"/>
    <property type="project" value="UniProtKB-UniRule"/>
</dbReference>
<dbReference type="GO" id="GO:0046081">
    <property type="term" value="P:dUTP catabolic process"/>
    <property type="evidence" value="ECO:0007669"/>
    <property type="project" value="InterPro"/>
</dbReference>
<dbReference type="CDD" id="cd07557">
    <property type="entry name" value="trimeric_dUTPase"/>
    <property type="match status" value="1"/>
</dbReference>
<dbReference type="FunFam" id="2.70.40.10:FF:000008">
    <property type="entry name" value="Deoxyuridine 5'-triphosphate nucleotidohydrolase"/>
    <property type="match status" value="1"/>
</dbReference>
<dbReference type="Gene3D" id="2.70.40.10">
    <property type="match status" value="1"/>
</dbReference>
<dbReference type="HAMAP" id="MF_00116">
    <property type="entry name" value="dUTPase_bact"/>
    <property type="match status" value="1"/>
</dbReference>
<dbReference type="InterPro" id="IPR008181">
    <property type="entry name" value="dUTPase"/>
</dbReference>
<dbReference type="InterPro" id="IPR029054">
    <property type="entry name" value="dUTPase-like"/>
</dbReference>
<dbReference type="InterPro" id="IPR036157">
    <property type="entry name" value="dUTPase-like_sf"/>
</dbReference>
<dbReference type="InterPro" id="IPR033704">
    <property type="entry name" value="dUTPase_trimeric"/>
</dbReference>
<dbReference type="NCBIfam" id="TIGR00576">
    <property type="entry name" value="dut"/>
    <property type="match status" value="1"/>
</dbReference>
<dbReference type="NCBIfam" id="NF001862">
    <property type="entry name" value="PRK00601.1"/>
    <property type="match status" value="1"/>
</dbReference>
<dbReference type="PANTHER" id="PTHR11241">
    <property type="entry name" value="DEOXYURIDINE 5'-TRIPHOSPHATE NUCLEOTIDOHYDROLASE"/>
    <property type="match status" value="1"/>
</dbReference>
<dbReference type="PANTHER" id="PTHR11241:SF0">
    <property type="entry name" value="DEOXYURIDINE 5'-TRIPHOSPHATE NUCLEOTIDOHYDROLASE"/>
    <property type="match status" value="1"/>
</dbReference>
<dbReference type="Pfam" id="PF00692">
    <property type="entry name" value="dUTPase"/>
    <property type="match status" value="1"/>
</dbReference>
<dbReference type="SUPFAM" id="SSF51283">
    <property type="entry name" value="dUTPase-like"/>
    <property type="match status" value="1"/>
</dbReference>
<evidence type="ECO:0000255" key="1">
    <source>
        <dbReference type="HAMAP-Rule" id="MF_00116"/>
    </source>
</evidence>
<evidence type="ECO:0000256" key="2">
    <source>
        <dbReference type="SAM" id="MobiDB-lite"/>
    </source>
</evidence>
<reference key="1">
    <citation type="journal article" date="2004" name="Proc. Natl. Acad. Sci. U.S.A.">
        <title>The complete genomic sequence of Nocardia farcinica IFM 10152.</title>
        <authorList>
            <person name="Ishikawa J."/>
            <person name="Yamashita A."/>
            <person name="Mikami Y."/>
            <person name="Hoshino Y."/>
            <person name="Kurita H."/>
            <person name="Hotta K."/>
            <person name="Shiba T."/>
            <person name="Hattori M."/>
        </authorList>
    </citation>
    <scope>NUCLEOTIDE SEQUENCE [LARGE SCALE GENOMIC DNA]</scope>
    <source>
        <strain>IFM 10152</strain>
    </source>
</reference>
<protein>
    <recommendedName>
        <fullName evidence="1">Deoxyuridine 5'-triphosphate nucleotidohydrolase</fullName>
        <shortName evidence="1">dUTPase</shortName>
        <ecNumber evidence="1">3.6.1.23</ecNumber>
    </recommendedName>
    <alternativeName>
        <fullName evidence="1">dUTP pyrophosphatase</fullName>
    </alternativeName>
</protein>
<sequence length="165" mass="16996">MSALSPIPLRRLDPGIPVPTRAHPGDAGVDLCTTEDVVLAPGERVLVGTGIAVALPVGTVGLIHPRSGLAAKTGLSVVNTPGTVDAGYRGEIKVCLINHDPRTPIELRRGDRIAQLLVQRVELVDFVEVEQLDETSRGAGGHGSSGGHASLTPGARSAARVAQEG</sequence>